<organism>
    <name type="scientific">Mus musculus</name>
    <name type="common">Mouse</name>
    <dbReference type="NCBI Taxonomy" id="10090"/>
    <lineage>
        <taxon>Eukaryota</taxon>
        <taxon>Metazoa</taxon>
        <taxon>Chordata</taxon>
        <taxon>Craniata</taxon>
        <taxon>Vertebrata</taxon>
        <taxon>Euteleostomi</taxon>
        <taxon>Mammalia</taxon>
        <taxon>Eutheria</taxon>
        <taxon>Euarchontoglires</taxon>
        <taxon>Glires</taxon>
        <taxon>Rodentia</taxon>
        <taxon>Myomorpha</taxon>
        <taxon>Muroidea</taxon>
        <taxon>Muridae</taxon>
        <taxon>Murinae</taxon>
        <taxon>Mus</taxon>
        <taxon>Mus</taxon>
    </lineage>
</organism>
<name>DCR1A_MOUSE</name>
<dbReference type="EC" id="3.5.2.6" evidence="2"/>
<dbReference type="EMBL" id="AF241240">
    <property type="protein sequence ID" value="AAF64472.1"/>
    <property type="molecule type" value="mRNA"/>
</dbReference>
<dbReference type="EMBL" id="BC072667">
    <property type="protein sequence ID" value="AAH72667.1"/>
    <property type="status" value="ALT_SEQ"/>
    <property type="molecule type" value="mRNA"/>
</dbReference>
<dbReference type="EMBL" id="AK220214">
    <property type="protein sequence ID" value="BAD90139.1"/>
    <property type="molecule type" value="mRNA"/>
</dbReference>
<dbReference type="SMR" id="Q9JIC3"/>
<dbReference type="FunCoup" id="Q9JIC3">
    <property type="interactions" value="2250"/>
</dbReference>
<dbReference type="STRING" id="10090.ENSMUSP00000138290"/>
<dbReference type="iPTMnet" id="Q9JIC3"/>
<dbReference type="PhosphoSitePlus" id="Q9JIC3"/>
<dbReference type="PaxDb" id="10090-ENSMUSP00000138290"/>
<dbReference type="ProteomicsDB" id="279887"/>
<dbReference type="AGR" id="MGI:1930042"/>
<dbReference type="MGI" id="MGI:1930042">
    <property type="gene designation" value="Dclre1a"/>
</dbReference>
<dbReference type="eggNOG" id="KOG1361">
    <property type="taxonomic scope" value="Eukaryota"/>
</dbReference>
<dbReference type="InParanoid" id="Q9JIC3"/>
<dbReference type="PhylomeDB" id="Q9JIC3"/>
<dbReference type="Reactome" id="R-MMU-6783310">
    <property type="pathway name" value="Fanconi Anemia Pathway"/>
</dbReference>
<dbReference type="ChiTaRS" id="Dclre1a">
    <property type="organism name" value="mouse"/>
</dbReference>
<dbReference type="PRO" id="PR:Q9JIC3"/>
<dbReference type="Proteomes" id="UP000000589">
    <property type="component" value="Unplaced"/>
</dbReference>
<dbReference type="RNAct" id="Q9JIC3">
    <property type="molecule type" value="protein"/>
</dbReference>
<dbReference type="GO" id="GO:0005634">
    <property type="term" value="C:nucleus"/>
    <property type="evidence" value="ECO:0000266"/>
    <property type="project" value="MGI"/>
</dbReference>
<dbReference type="GO" id="GO:0008800">
    <property type="term" value="F:beta-lactamase activity"/>
    <property type="evidence" value="ECO:0000250"/>
    <property type="project" value="UniProtKB"/>
</dbReference>
<dbReference type="GO" id="GO:0003677">
    <property type="term" value="F:DNA binding"/>
    <property type="evidence" value="ECO:0007669"/>
    <property type="project" value="InterPro"/>
</dbReference>
<dbReference type="GO" id="GO:0008270">
    <property type="term" value="F:zinc ion binding"/>
    <property type="evidence" value="ECO:0007669"/>
    <property type="project" value="UniProtKB-KW"/>
</dbReference>
<dbReference type="GO" id="GO:0051301">
    <property type="term" value="P:cell division"/>
    <property type="evidence" value="ECO:0007669"/>
    <property type="project" value="UniProtKB-KW"/>
</dbReference>
<dbReference type="GO" id="GO:0006289">
    <property type="term" value="P:nucleotide-excision repair"/>
    <property type="evidence" value="ECO:0000315"/>
    <property type="project" value="MGI"/>
</dbReference>
<dbReference type="FunFam" id="3.40.50.12650:FF:000001">
    <property type="entry name" value="DNA cross-link repair 1A"/>
    <property type="match status" value="1"/>
</dbReference>
<dbReference type="FunFam" id="3.60.15.10:FF:000010">
    <property type="entry name" value="DNA cross-link repair 1A"/>
    <property type="match status" value="1"/>
</dbReference>
<dbReference type="Gene3D" id="3.40.50.12650">
    <property type="match status" value="1"/>
</dbReference>
<dbReference type="Gene3D" id="3.60.15.10">
    <property type="entry name" value="Ribonuclease Z/Hydroxyacylglutathione hydrolase-like"/>
    <property type="match status" value="1"/>
</dbReference>
<dbReference type="InterPro" id="IPR011084">
    <property type="entry name" value="DRMBL"/>
</dbReference>
<dbReference type="InterPro" id="IPR006642">
    <property type="entry name" value="Rad18_UBZ4"/>
</dbReference>
<dbReference type="InterPro" id="IPR036866">
    <property type="entry name" value="RibonucZ/Hydroxyglut_hydro"/>
</dbReference>
<dbReference type="PANTHER" id="PTHR23240:SF6">
    <property type="entry name" value="DNA CROSS-LINK REPAIR 1A PROTEIN"/>
    <property type="match status" value="1"/>
</dbReference>
<dbReference type="PANTHER" id="PTHR23240">
    <property type="entry name" value="DNA CROSS-LINK REPAIR PROTEIN PSO2/SNM1-RELATED"/>
    <property type="match status" value="1"/>
</dbReference>
<dbReference type="Pfam" id="PF07522">
    <property type="entry name" value="DRMBL"/>
    <property type="match status" value="1"/>
</dbReference>
<dbReference type="SUPFAM" id="SSF56281">
    <property type="entry name" value="Metallo-hydrolase/oxidoreductase"/>
    <property type="match status" value="1"/>
</dbReference>
<dbReference type="PROSITE" id="PS51908">
    <property type="entry name" value="ZF_UBZ4"/>
    <property type="match status" value="1"/>
</dbReference>
<comment type="function">
    <text evidence="5 6">May be required for DNA interstrand cross-link repair. Also required for checkpoint mediated cell cycle arrest in early prophase in response to mitotic spindle poisons.</text>
</comment>
<comment type="catalytic activity">
    <reaction evidence="2">
        <text>a beta-lactam + H2O = a substituted beta-amino acid</text>
        <dbReference type="Rhea" id="RHEA:20401"/>
        <dbReference type="ChEBI" id="CHEBI:15377"/>
        <dbReference type="ChEBI" id="CHEBI:35627"/>
        <dbReference type="ChEBI" id="CHEBI:140347"/>
        <dbReference type="EC" id="3.5.2.6"/>
    </reaction>
</comment>
<comment type="subunit">
    <text evidence="1">Binds constitutively to TP53BP1. Binds CDC27, which is itself a component of the anaphase promoting complex (APC). Binds PIAS1 (By similarity).</text>
</comment>
<comment type="subcellular location">
    <subcellularLocation>
        <location evidence="1">Nucleus</location>
    </subcellularLocation>
    <text evidence="1">In some cells it may be found in typically 1 or 2 discrete nuclear aggregates of unknown function which also contain TP53BP1. Also found in multiple discrete nuclear foci which increase in number following treatment with ionizing radiation or interstrand cross-linking agents. These foci overlap with those formed by the MRN complex (composed of MRE11, RAD50 and NBN) and BRCA1 (By similarity).</text>
</comment>
<comment type="similarity">
    <text evidence="7">Belongs to the DNA repair metallo-beta-lactamase (DRMBL) family.</text>
</comment>
<comment type="sequence caution" evidence="7">
    <conflict type="miscellaneous discrepancy">
        <sequence resource="EMBL-CDS" id="AAH72667"/>
    </conflict>
    <text>Intron retention.</text>
</comment>
<feature type="chain" id="PRO_0000209117" description="DNA cross-link repair 1A protein">
    <location>
        <begin position="1"/>
        <end position="1026"/>
    </location>
</feature>
<feature type="zinc finger region" description="UBZ4-type" evidence="3">
    <location>
        <begin position="118"/>
        <end position="148"/>
    </location>
</feature>
<feature type="region of interest" description="Nuclear localization region" evidence="1">
    <location>
        <begin position="1"/>
        <end position="189"/>
    </location>
</feature>
<feature type="region of interest" description="Disordered" evidence="4">
    <location>
        <begin position="12"/>
        <end position="110"/>
    </location>
</feature>
<feature type="region of interest" description="Nuclear focus formation" evidence="1">
    <location>
        <begin position="401"/>
        <end position="602"/>
    </location>
</feature>
<feature type="region of interest" description="Disordered" evidence="4">
    <location>
        <begin position="474"/>
        <end position="542"/>
    </location>
</feature>
<feature type="region of interest" description="Disordered" evidence="4">
    <location>
        <begin position="560"/>
        <end position="590"/>
    </location>
</feature>
<feature type="region of interest" description="Disordered" evidence="4">
    <location>
        <begin position="602"/>
        <end position="651"/>
    </location>
</feature>
<feature type="compositionally biased region" description="Basic and acidic residues" evidence="4">
    <location>
        <begin position="34"/>
        <end position="65"/>
    </location>
</feature>
<feature type="compositionally biased region" description="Low complexity" evidence="4">
    <location>
        <begin position="71"/>
        <end position="82"/>
    </location>
</feature>
<feature type="compositionally biased region" description="Basic residues" evidence="4">
    <location>
        <begin position="98"/>
        <end position="107"/>
    </location>
</feature>
<feature type="compositionally biased region" description="Low complexity" evidence="4">
    <location>
        <begin position="527"/>
        <end position="540"/>
    </location>
</feature>
<feature type="compositionally biased region" description="Polar residues" evidence="4">
    <location>
        <begin position="569"/>
        <end position="581"/>
    </location>
</feature>
<feature type="compositionally biased region" description="Basic residues" evidence="4">
    <location>
        <begin position="619"/>
        <end position="628"/>
    </location>
</feature>
<feature type="binding site" evidence="3">
    <location>
        <position position="121"/>
    </location>
    <ligand>
        <name>Zn(2+)</name>
        <dbReference type="ChEBI" id="CHEBI:29105"/>
    </ligand>
</feature>
<feature type="binding site" evidence="3">
    <location>
        <position position="124"/>
    </location>
    <ligand>
        <name>Zn(2+)</name>
        <dbReference type="ChEBI" id="CHEBI:29105"/>
    </ligand>
</feature>
<feature type="binding site" evidence="3">
    <location>
        <position position="139"/>
    </location>
    <ligand>
        <name>Zn(2+)</name>
        <dbReference type="ChEBI" id="CHEBI:29105"/>
    </ligand>
</feature>
<feature type="binding site" evidence="3">
    <location>
        <position position="143"/>
    </location>
    <ligand>
        <name>Zn(2+)</name>
        <dbReference type="ChEBI" id="CHEBI:29105"/>
    </ligand>
</feature>
<feature type="modified residue" description="Phosphoserine" evidence="8">
    <location>
        <position position="574"/>
    </location>
</feature>
<feature type="modified residue" description="Phosphoserine" evidence="8">
    <location>
        <position position="578"/>
    </location>
</feature>
<feature type="cross-link" description="Glycyl lysine isopeptide (Lys-Gly) (interchain with G-Cter in SUMO2)" evidence="2">
    <location>
        <position position="359"/>
    </location>
</feature>
<feature type="cross-link" description="Glycyl lysine isopeptide (Lys-Gly) (interchain with G-Cter in SUMO2)" evidence="2">
    <location>
        <position position="434"/>
    </location>
</feature>
<feature type="cross-link" description="Glycyl lysine isopeptide (Lys-Gly) (interchain with G-Cter in SUMO2)" evidence="2">
    <location>
        <position position="522"/>
    </location>
</feature>
<feature type="cross-link" description="Glycyl lysine isopeptide (Lys-Gly) (interchain with G-Cter in SUMO2)" evidence="2">
    <location>
        <position position="657"/>
    </location>
</feature>
<feature type="sequence conflict" description="In Ref. 2; AAH72667." evidence="7" ref="2">
    <original>T</original>
    <variation>TF</variation>
    <location>
        <position position="5"/>
    </location>
</feature>
<feature type="sequence conflict" description="In Ref. 1; AAF64472." evidence="7" ref="1">
    <original>T</original>
    <variation>A</variation>
    <location>
        <position position="52"/>
    </location>
</feature>
<feature type="sequence conflict" description="In Ref. 3; BAD90139." evidence="7" ref="3">
    <original>S</original>
    <variation>N</variation>
    <location>
        <position position="188"/>
    </location>
</feature>
<feature type="sequence conflict" description="In Ref. 3; BAD90139." evidence="7" ref="3">
    <original>S</original>
    <variation>P</variation>
    <location>
        <position position="241"/>
    </location>
</feature>
<feature type="sequence conflict" description="In Ref. 1; AAF64472." evidence="7" ref="1">
    <original>RD</original>
    <variation>KT</variation>
    <location>
        <begin position="268"/>
        <end position="269"/>
    </location>
</feature>
<feature type="sequence conflict" description="In Ref. 1; AAF64472." evidence="7" ref="1">
    <original>SMG</original>
    <variation>YVA</variation>
    <location>
        <begin position="291"/>
        <end position="293"/>
    </location>
</feature>
<feature type="sequence conflict" description="In Ref. 1; AAF64472." evidence="7" ref="1">
    <original>LPENDTDSCEI</original>
    <variation>EMTLTAVV</variation>
    <location>
        <begin position="296"/>
        <end position="306"/>
    </location>
</feature>
<feature type="sequence conflict" description="In Ref. 1; AAF64472." evidence="7" ref="1">
    <original>QEL</original>
    <variation>PRA</variation>
    <location>
        <begin position="322"/>
        <end position="324"/>
    </location>
</feature>
<feature type="sequence conflict" description="In Ref. 1; AAF64472." evidence="7" ref="1">
    <original>G</original>
    <variation>C</variation>
    <location>
        <position position="346"/>
    </location>
</feature>
<feature type="sequence conflict" description="In Ref. 1; AAF64472." evidence="7" ref="1">
    <original>A</original>
    <variation>G</variation>
    <location>
        <position position="361"/>
    </location>
</feature>
<feature type="sequence conflict" description="In Ref. 1; AAF64472." evidence="7" ref="1">
    <original>A</original>
    <variation>P</variation>
    <location>
        <position position="373"/>
    </location>
</feature>
<feature type="sequence conflict" description="In Ref. 2; AAH72667." evidence="7" ref="2">
    <original>S</original>
    <variation>F</variation>
    <location>
        <position position="394"/>
    </location>
</feature>
<feature type="sequence conflict" description="In Ref. 1; AAF64472." evidence="7" ref="1">
    <original>G</original>
    <variation>R</variation>
    <location>
        <position position="525"/>
    </location>
</feature>
<feature type="sequence conflict" description="In Ref. 2; AAH72667." evidence="7" ref="2">
    <original>S</original>
    <variation>I</variation>
    <location>
        <position position="654"/>
    </location>
</feature>
<feature type="sequence conflict" description="In Ref. 2; AAH72667." evidence="7" ref="2">
    <original>K</original>
    <variation>KGK</variation>
    <location>
        <position position="657"/>
    </location>
</feature>
<feature type="sequence conflict" description="In Ref. 1; AAF64472." evidence="7" ref="1">
    <original>LL</original>
    <variation>FV</variation>
    <location>
        <begin position="774"/>
        <end position="775"/>
    </location>
</feature>
<protein>
    <recommendedName>
        <fullName>DNA cross-link repair 1A protein</fullName>
    </recommendedName>
    <alternativeName>
        <fullName>Beta-lactamase MBLAC2</fullName>
        <ecNumber evidence="2">3.5.2.6</ecNumber>
    </alternativeName>
    <alternativeName>
        <fullName>SNM1 homolog A</fullName>
    </alternativeName>
</protein>
<sequence>MLEDTWEEEIWEYKSKRKPKPVHPNNCSENISESVEKSTDGKHQSKGNEKRTSENPGKTKDHKVCLAETDSQISAGSSQSSSCRDESQQSQNKETTPKKQHRTRRGKQVTPKVRPVYDGYCPSCQMPFSSLLGQTPQWHVFECLDSPPISDTECPEGLLCTSTIPSHYKKYTHILLAQSRDSKEPLGSPSDALAGLFAAAAPGSPCNLEERRSMTLKTENLRKVSDHSLLMMQYLETSQPSAEINRKNVSSPCSQTSPVPQCAEFVKRDQLVGGGSPLAEVALNSQSKSGSMGLPLPENDTDSCEISYSPLHSDEETYDIDQELDDSQQELFFTQSSKDSSLEEDGSAIFENLHGPSPKEAEGIRPTAKSLVAQARCSAPSEGSTLSDSFLLLSYTSNRLSQEDLPHTDAAFHLLSPALAVGGAASNYQTSKAKLDEPEKFLSLASSHQQQKIETSAVGNQTSLPLLTRARSKPLEKEGGKCLPLHPTQSQTRGSPRKGLGAPGANCACRNAQKRSSMPLDKPLGTSPSSPKCSPSQPSKKVMKQMDIGVFFGLPPKRQETSLRESASEGPNVSPVVSPNQKRPRLCKRKAQSSLSDLEFDAKNLNESQHSVGLSGEKRQHRRKRHKTSNSPREGPCQRRSGHLMNNPELGPVSLSKAFVRRTRGRTQRGNMNISESSGAGEVRRTCPFYKRIPGTGFTVDAFQYGEIEGCTAYFLTHFHSDHYAGLSKDFTRPVYCSEITGNLLKKKLRVQEQYIRQLPMDTECVVDSVKVVLLDANHCPGATMILFQLPNGAVILHTGDFRADPSMERSRLAGRKVHTLFLDTTYCSPEYTFPSQQEVIQFAINTAFEAVTLNPRALVVCGTYCIGKEKVFLAIADVLGSKVGMSQEKYKTLQCLNIPEVSSLITTDMCDSLVHLLPMMQINFKGLQSHLKKCGGKYDQILAFRPTGWTHSNNITSTADIIPQTRGNISIYGIPYSEHSSYLEMKRFVQWLKPQKIIPTVNVGSFRSRNTMEKYFKEWRLEAGY</sequence>
<gene>
    <name type="primary">Dclre1a</name>
    <name type="synonym">Kiaa0086</name>
    <name type="synonym">Snm1</name>
    <name type="synonym">Snm1a</name>
</gene>
<accession>Q9JIC3</accession>
<accession>Q571H5</accession>
<accession>Q6GQR6</accession>
<keyword id="KW-0131">Cell cycle</keyword>
<keyword id="KW-0132">Cell division</keyword>
<keyword id="KW-0227">DNA damage</keyword>
<keyword id="KW-0234">DNA repair</keyword>
<keyword id="KW-0378">Hydrolase</keyword>
<keyword id="KW-1017">Isopeptide bond</keyword>
<keyword id="KW-0479">Metal-binding</keyword>
<keyword id="KW-0498">Mitosis</keyword>
<keyword id="KW-0539">Nucleus</keyword>
<keyword id="KW-0597">Phosphoprotein</keyword>
<keyword id="KW-1185">Reference proteome</keyword>
<keyword id="KW-0832">Ubl conjugation</keyword>
<keyword id="KW-0862">Zinc</keyword>
<keyword id="KW-0863">Zinc-finger</keyword>
<proteinExistence type="evidence at protein level"/>
<reference key="1">
    <citation type="journal article" date="2000" name="Mol. Cell. Biol.">
        <title>Disruption of mouse SNM1 causes increased sensitivity to the DNA interstrand cross-linking agent mitomycin C.</title>
        <authorList>
            <person name="Dronkert M.L.G."/>
            <person name="de Wit J."/>
            <person name="Boeve M."/>
            <person name="Vasconcelos M.L."/>
            <person name="van Steeg H."/>
            <person name="Tan T.L.R."/>
            <person name="Hoeijmakers J.H.J."/>
            <person name="Kanaar R."/>
        </authorList>
    </citation>
    <scope>NUCLEOTIDE SEQUENCE [MRNA]</scope>
    <scope>FUNCTION</scope>
    <source>
        <strain>129/Sv</strain>
    </source>
</reference>
<reference key="2">
    <citation type="journal article" date="2004" name="Genome Res.">
        <title>The status, quality, and expansion of the NIH full-length cDNA project: the Mammalian Gene Collection (MGC).</title>
        <authorList>
            <consortium name="The MGC Project Team"/>
        </authorList>
    </citation>
    <scope>NUCLEOTIDE SEQUENCE [LARGE SCALE MRNA]</scope>
    <source>
        <strain>C57BL/6J</strain>
        <tissue>Eye</tissue>
    </source>
</reference>
<reference key="3">
    <citation type="submission" date="2005-02" db="EMBL/GenBank/DDBJ databases">
        <title>Prediction of the coding sequences of mouse homologues of KIAA gene. The complete nucleotide sequences of mouse KIAA-homologous cDNAs identified by screening of terminal sequences of cDNA clones randomly sampled from size-fractionated libraries.</title>
        <authorList>
            <person name="Okazaki N."/>
            <person name="Kikuno R.F."/>
            <person name="Ohara R."/>
            <person name="Inamoto S."/>
            <person name="Kitamura H."/>
            <person name="Nagase T."/>
            <person name="Ohara O."/>
            <person name="Koga H."/>
        </authorList>
    </citation>
    <scope>NUCLEOTIDE SEQUENCE [LARGE SCALE MRNA] OF 43-1023</scope>
    <source>
        <tissue>Spleen</tissue>
    </source>
</reference>
<reference key="4">
    <citation type="journal article" date="2004" name="Mol. Cell. Biol.">
        <title>Deficiency in SNM1 abolishes an early mitotic checkpoint induced by spindle stress.</title>
        <authorList>
            <person name="Akhter S."/>
            <person name="Richie C.T."/>
            <person name="Deng J.M."/>
            <person name="Brey E."/>
            <person name="Zhang X."/>
            <person name="Patrick C. Jr."/>
            <person name="Behringer R.R."/>
            <person name="Legerski R.J."/>
        </authorList>
    </citation>
    <scope>FUNCTION</scope>
</reference>
<reference key="5">
    <citation type="journal article" date="2010" name="Cell">
        <title>A tissue-specific atlas of mouse protein phosphorylation and expression.</title>
        <authorList>
            <person name="Huttlin E.L."/>
            <person name="Jedrychowski M.P."/>
            <person name="Elias J.E."/>
            <person name="Goswami T."/>
            <person name="Rad R."/>
            <person name="Beausoleil S.A."/>
            <person name="Villen J."/>
            <person name="Haas W."/>
            <person name="Sowa M.E."/>
            <person name="Gygi S.P."/>
        </authorList>
    </citation>
    <scope>PHOSPHORYLATION [LARGE SCALE ANALYSIS] AT SER-574 AND SER-578</scope>
    <scope>IDENTIFICATION BY MASS SPECTROMETRY [LARGE SCALE ANALYSIS]</scope>
    <source>
        <tissue>Spleen</tissue>
    </source>
</reference>
<evidence type="ECO:0000250" key="1"/>
<evidence type="ECO:0000250" key="2">
    <source>
        <dbReference type="UniProtKB" id="Q6PJP8"/>
    </source>
</evidence>
<evidence type="ECO:0000255" key="3">
    <source>
        <dbReference type="PROSITE-ProRule" id="PRU01256"/>
    </source>
</evidence>
<evidence type="ECO:0000256" key="4">
    <source>
        <dbReference type="SAM" id="MobiDB-lite"/>
    </source>
</evidence>
<evidence type="ECO:0000269" key="5">
    <source>
    </source>
</evidence>
<evidence type="ECO:0000269" key="6">
    <source>
    </source>
</evidence>
<evidence type="ECO:0000305" key="7"/>
<evidence type="ECO:0007744" key="8">
    <source>
    </source>
</evidence>